<protein>
    <recommendedName>
        <fullName evidence="1">Peptide chain release factor 1</fullName>
        <shortName evidence="1">RF-1</shortName>
    </recommendedName>
</protein>
<sequence>MDNVMAQLESLEVRYEEIQEMMADPEVIADTKRYMEITKEEADMREVVQKFRKFKADKEEIAGNKEIIADGSDPELVEMAKMENSELEDEISQLEDEIKILMLPKDPNDDKDIIMEIRGAAGGDEASLFAGDLLRMYEKYAENQGWNVSIVDSEQTEVGGYKRVAIMITGNKVYSKLKYENGAHRVQRIPVTESAGRVHTSTATVAVMPEYEQVDIDLDPKEIRVDVYRSSGAGGQHINKTSSAVRMTHLPTGIVVAMQDQRSQQQNRAKAMEILKSRVYDYYESQNRDKYDAKRKNAVGTGDRSERIRTYNYPQNRVTDHRIGLTLNKLDRIMNGELDEVIDALTVYYQTKQLEELAENA</sequence>
<reference key="1">
    <citation type="journal article" date="2006" name="Proc. Natl. Acad. Sci. U.S.A.">
        <title>Comparative genomics of the lactic acid bacteria.</title>
        <authorList>
            <person name="Makarova K.S."/>
            <person name="Slesarev A."/>
            <person name="Wolf Y.I."/>
            <person name="Sorokin A."/>
            <person name="Mirkin B."/>
            <person name="Koonin E.V."/>
            <person name="Pavlov A."/>
            <person name="Pavlova N."/>
            <person name="Karamychev V."/>
            <person name="Polouchine N."/>
            <person name="Shakhova V."/>
            <person name="Grigoriev I."/>
            <person name="Lou Y."/>
            <person name="Rohksar D."/>
            <person name="Lucas S."/>
            <person name="Huang K."/>
            <person name="Goodstein D.M."/>
            <person name="Hawkins T."/>
            <person name="Plengvidhya V."/>
            <person name="Welker D."/>
            <person name="Hughes J."/>
            <person name="Goh Y."/>
            <person name="Benson A."/>
            <person name="Baldwin K."/>
            <person name="Lee J.-H."/>
            <person name="Diaz-Muniz I."/>
            <person name="Dosti B."/>
            <person name="Smeianov V."/>
            <person name="Wechter W."/>
            <person name="Barabote R."/>
            <person name="Lorca G."/>
            <person name="Altermann E."/>
            <person name="Barrangou R."/>
            <person name="Ganesan B."/>
            <person name="Xie Y."/>
            <person name="Rawsthorne H."/>
            <person name="Tamir D."/>
            <person name="Parker C."/>
            <person name="Breidt F."/>
            <person name="Broadbent J.R."/>
            <person name="Hutkins R."/>
            <person name="O'Sullivan D."/>
            <person name="Steele J."/>
            <person name="Unlu G."/>
            <person name="Saier M.H. Jr."/>
            <person name="Klaenhammer T."/>
            <person name="Richardson P."/>
            <person name="Kozyavkin S."/>
            <person name="Weimer B.C."/>
            <person name="Mills D.A."/>
        </authorList>
    </citation>
    <scope>NUCLEOTIDE SEQUENCE [LARGE SCALE GENOMIC DNA]</scope>
    <source>
        <strain>ATCC BAA-365 / Lb-18</strain>
    </source>
</reference>
<name>RF1_LACDB</name>
<dbReference type="EMBL" id="CP000412">
    <property type="protein sequence ID" value="ABJ58259.1"/>
    <property type="molecule type" value="Genomic_DNA"/>
</dbReference>
<dbReference type="RefSeq" id="WP_003617391.1">
    <property type="nucleotide sequence ID" value="NC_008529.1"/>
</dbReference>
<dbReference type="SMR" id="Q04BB3"/>
<dbReference type="KEGG" id="lbu:LBUL_0633"/>
<dbReference type="HOGENOM" id="CLU_036856_0_1_9"/>
<dbReference type="BioCyc" id="LDEL321956:LBUL_RS03010-MONOMER"/>
<dbReference type="GO" id="GO:0005737">
    <property type="term" value="C:cytoplasm"/>
    <property type="evidence" value="ECO:0007669"/>
    <property type="project" value="UniProtKB-SubCell"/>
</dbReference>
<dbReference type="GO" id="GO:0016149">
    <property type="term" value="F:translation release factor activity, codon specific"/>
    <property type="evidence" value="ECO:0007669"/>
    <property type="project" value="UniProtKB-UniRule"/>
</dbReference>
<dbReference type="FunFam" id="3.30.160.20:FF:000004">
    <property type="entry name" value="Peptide chain release factor 1"/>
    <property type="match status" value="1"/>
</dbReference>
<dbReference type="FunFam" id="3.30.70.1660:FF:000002">
    <property type="entry name" value="Peptide chain release factor 1"/>
    <property type="match status" value="1"/>
</dbReference>
<dbReference type="FunFam" id="3.30.70.1660:FF:000004">
    <property type="entry name" value="Peptide chain release factor 1"/>
    <property type="match status" value="1"/>
</dbReference>
<dbReference type="Gene3D" id="3.30.160.20">
    <property type="match status" value="1"/>
</dbReference>
<dbReference type="Gene3D" id="3.30.70.1660">
    <property type="match status" value="2"/>
</dbReference>
<dbReference type="Gene3D" id="6.10.140.1950">
    <property type="match status" value="1"/>
</dbReference>
<dbReference type="HAMAP" id="MF_00093">
    <property type="entry name" value="Rel_fac_1"/>
    <property type="match status" value="1"/>
</dbReference>
<dbReference type="InterPro" id="IPR005139">
    <property type="entry name" value="PCRF"/>
</dbReference>
<dbReference type="InterPro" id="IPR000352">
    <property type="entry name" value="Pep_chain_release_fac_I"/>
</dbReference>
<dbReference type="InterPro" id="IPR045853">
    <property type="entry name" value="Pep_chain_release_fac_I_sf"/>
</dbReference>
<dbReference type="InterPro" id="IPR050057">
    <property type="entry name" value="Prokaryotic/Mito_RF"/>
</dbReference>
<dbReference type="InterPro" id="IPR004373">
    <property type="entry name" value="RF-1"/>
</dbReference>
<dbReference type="NCBIfam" id="TIGR00019">
    <property type="entry name" value="prfA"/>
    <property type="match status" value="1"/>
</dbReference>
<dbReference type="NCBIfam" id="NF001859">
    <property type="entry name" value="PRK00591.1"/>
    <property type="match status" value="1"/>
</dbReference>
<dbReference type="PANTHER" id="PTHR43804">
    <property type="entry name" value="LD18447P"/>
    <property type="match status" value="1"/>
</dbReference>
<dbReference type="PANTHER" id="PTHR43804:SF7">
    <property type="entry name" value="LD18447P"/>
    <property type="match status" value="1"/>
</dbReference>
<dbReference type="Pfam" id="PF03462">
    <property type="entry name" value="PCRF"/>
    <property type="match status" value="1"/>
</dbReference>
<dbReference type="Pfam" id="PF00472">
    <property type="entry name" value="RF-1"/>
    <property type="match status" value="1"/>
</dbReference>
<dbReference type="SMART" id="SM00937">
    <property type="entry name" value="PCRF"/>
    <property type="match status" value="1"/>
</dbReference>
<dbReference type="SUPFAM" id="SSF75620">
    <property type="entry name" value="Release factor"/>
    <property type="match status" value="1"/>
</dbReference>
<dbReference type="PROSITE" id="PS00745">
    <property type="entry name" value="RF_PROK_I"/>
    <property type="match status" value="1"/>
</dbReference>
<accession>Q04BB3</accession>
<gene>
    <name evidence="1" type="primary">prfA</name>
    <name type="ordered locus">LBUL_0633</name>
</gene>
<organism>
    <name type="scientific">Lactobacillus delbrueckii subsp. bulgaricus (strain ATCC BAA-365 / Lb-18)</name>
    <dbReference type="NCBI Taxonomy" id="321956"/>
    <lineage>
        <taxon>Bacteria</taxon>
        <taxon>Bacillati</taxon>
        <taxon>Bacillota</taxon>
        <taxon>Bacilli</taxon>
        <taxon>Lactobacillales</taxon>
        <taxon>Lactobacillaceae</taxon>
        <taxon>Lactobacillus</taxon>
    </lineage>
</organism>
<keyword id="KW-0963">Cytoplasm</keyword>
<keyword id="KW-0488">Methylation</keyword>
<keyword id="KW-0648">Protein biosynthesis</keyword>
<comment type="function">
    <text evidence="1">Peptide chain release factor 1 directs the termination of translation in response to the peptide chain termination codons UAG and UAA.</text>
</comment>
<comment type="subcellular location">
    <subcellularLocation>
        <location evidence="1">Cytoplasm</location>
    </subcellularLocation>
</comment>
<comment type="PTM">
    <text evidence="1">Methylated by PrmC. Methylation increases the termination efficiency of RF1.</text>
</comment>
<comment type="similarity">
    <text evidence="1">Belongs to the prokaryotic/mitochondrial release factor family.</text>
</comment>
<proteinExistence type="inferred from homology"/>
<evidence type="ECO:0000255" key="1">
    <source>
        <dbReference type="HAMAP-Rule" id="MF_00093"/>
    </source>
</evidence>
<feature type="chain" id="PRO_1000004902" description="Peptide chain release factor 1">
    <location>
        <begin position="1"/>
        <end position="361"/>
    </location>
</feature>
<feature type="modified residue" description="N5-methylglutamine" evidence="1">
    <location>
        <position position="236"/>
    </location>
</feature>